<protein>
    <recommendedName>
        <fullName>DNA-directed RNA polymerase subunit beta</fullName>
        <ecNumber>2.7.7.6</ecNumber>
    </recommendedName>
    <alternativeName>
        <fullName>PEP</fullName>
    </alternativeName>
    <alternativeName>
        <fullName>Plastid-encoded RNA polymerase subunit beta</fullName>
        <shortName>RNA polymerase subunit beta</shortName>
    </alternativeName>
</protein>
<evidence type="ECO:0000250" key="1"/>
<evidence type="ECO:0000305" key="2"/>
<organism>
    <name type="scientific">Sinapis alba</name>
    <name type="common">White mustard</name>
    <name type="synonym">Brassica hirta</name>
    <dbReference type="NCBI Taxonomy" id="3728"/>
    <lineage>
        <taxon>Eukaryota</taxon>
        <taxon>Viridiplantae</taxon>
        <taxon>Streptophyta</taxon>
        <taxon>Embryophyta</taxon>
        <taxon>Tracheophyta</taxon>
        <taxon>Spermatophyta</taxon>
        <taxon>Magnoliopsida</taxon>
        <taxon>eudicotyledons</taxon>
        <taxon>Gunneridae</taxon>
        <taxon>Pentapetalae</taxon>
        <taxon>rosids</taxon>
        <taxon>malvids</taxon>
        <taxon>Brassicales</taxon>
        <taxon>Brassicaceae</taxon>
        <taxon>Brassiceae</taxon>
        <taxon>Sinapis</taxon>
    </lineage>
</organism>
<sequence length="1078" mass="121654">MINAKKMLGDGKEGTSTIPGFNQIQFEGFYRFIDQGLIEELSKFPKIEDIDHEIEFQLFVETYQLVEPLIKERDAVYESLTYSSELYVSAGLIWKTNRNMQEQRIFIGNIPLMNSLGTSIVNGIYRVVINQILQSPGIYYQSELDHNGISVYTGTIISDWGGRLELEIDKKARIWARVSRKQKISILVLSSAMGSNLREILENVCYPEIFLSFLTDKEKKKIGSKENAILEFYQQFSCVGGDPIFSESLCKELQKKFFHQRCELGRIGRRNINWRLNLNIPQNNIFLLPRDILAAADHLIGMKFGMGTLDDMNHLKNKRIRSVADLLQDQLGLALARLENVVKGTIGGAIRHKLIPPTQNLVTSTPLTTTYESFFGFHPLSQVLDRTNPLTQIVHGRKLSYLGPGGLTGRTANFRIRDIHPSHYGRICPIDTSEGINVGLIGSLSIHARIGDWGSLESPFYELVEKSKKAQIRMLFLSPSQDEYYMIAAGNSLALNRGIQEEQVVPARYRQEFLTIAWEEVHLRSIFPFQYFSIGASLIPFIEHNDANRALMSSNMQRQAVPLSRSEKCIVGTGLERQVALDSGVPAIAEHEGKILYTDTEKIILSGNENTLSIPLIMYQRSNKNTCMHQKPQVPRGKCIKKGQILADGAATVGGELALGKNVLVAYMPWEGYNFEDAVLISECLVYGDIYTSFHIRKYEIQTHVTTQGPERITKEIPHLEGRLLRNLDKNGIVMLGSWVETGDILVGKLTPQVAKESSYAPEDRLLRAILGIQVSTSKETCLKLPIGGRGRVIDVRWVQKKGGSSYNPEIIRVYISQKREIKVGDKVAGRHGNKGIISKILPRQDMPYLQDGRPVDMVFNPLGVPSRMNVGQIFECSLGLAGSLLDRHYRIAPFDERYEQEASRKLVFSELYEASKQTANPWVFEPEYPGKSRIFDGRTGDPFEQPVIIGKPYILKLIHQVDDKIHGRSSGHYALVTQQPLRGRSKQGGQRVGEMEVWALEGFGVAHILQEMLTYKSDHIRARQEVLGTTIIGGTIPKPEDAPESFRLLVRELRSLALELNHFLVSEKNFQINRKEV</sequence>
<dbReference type="EC" id="2.7.7.6"/>
<dbReference type="EMBL" id="X82417">
    <property type="protein sequence ID" value="CAA57814.1"/>
    <property type="molecule type" value="Genomic_DNA"/>
</dbReference>
<dbReference type="EMBL" id="AJ243754">
    <property type="protein sequence ID" value="CAB48411.1"/>
    <property type="molecule type" value="Genomic_DNA"/>
</dbReference>
<dbReference type="PIR" id="S48842">
    <property type="entry name" value="S48842"/>
</dbReference>
<dbReference type="PDB" id="8QMA">
    <property type="method" value="EM"/>
    <property type="resolution" value="3.50 A"/>
    <property type="chains" value="A=7-1078"/>
</dbReference>
<dbReference type="PDB" id="8R5O">
    <property type="method" value="EM"/>
    <property type="resolution" value="2.49 A"/>
    <property type="chains" value="C=7-1078"/>
</dbReference>
<dbReference type="PDB" id="8R6S">
    <property type="method" value="EM"/>
    <property type="resolution" value="2.49 A"/>
    <property type="chains" value="C=7-1078"/>
</dbReference>
<dbReference type="PDB" id="8RAS">
    <property type="method" value="EM"/>
    <property type="resolution" value="2.62 A"/>
    <property type="chains" value="C=7-1078"/>
</dbReference>
<dbReference type="PDB" id="8RDJ">
    <property type="method" value="EM"/>
    <property type="resolution" value="2.62 A"/>
    <property type="chains" value="C=7-1078"/>
</dbReference>
<dbReference type="PDBsum" id="8QMA"/>
<dbReference type="PDBsum" id="8R5O"/>
<dbReference type="PDBsum" id="8R6S"/>
<dbReference type="PDBsum" id="8RAS"/>
<dbReference type="PDBsum" id="8RDJ"/>
<dbReference type="SMR" id="P46818"/>
<dbReference type="GO" id="GO:0009507">
    <property type="term" value="C:chloroplast"/>
    <property type="evidence" value="ECO:0007669"/>
    <property type="project" value="UniProtKB-SubCell"/>
</dbReference>
<dbReference type="GO" id="GO:0000428">
    <property type="term" value="C:DNA-directed RNA polymerase complex"/>
    <property type="evidence" value="ECO:0007669"/>
    <property type="project" value="UniProtKB-KW"/>
</dbReference>
<dbReference type="GO" id="GO:0005739">
    <property type="term" value="C:mitochondrion"/>
    <property type="evidence" value="ECO:0007669"/>
    <property type="project" value="GOC"/>
</dbReference>
<dbReference type="GO" id="GO:0003677">
    <property type="term" value="F:DNA binding"/>
    <property type="evidence" value="ECO:0007669"/>
    <property type="project" value="UniProtKB-UniRule"/>
</dbReference>
<dbReference type="GO" id="GO:0003899">
    <property type="term" value="F:DNA-directed RNA polymerase activity"/>
    <property type="evidence" value="ECO:0007669"/>
    <property type="project" value="UniProtKB-UniRule"/>
</dbReference>
<dbReference type="GO" id="GO:0032549">
    <property type="term" value="F:ribonucleoside binding"/>
    <property type="evidence" value="ECO:0007669"/>
    <property type="project" value="InterPro"/>
</dbReference>
<dbReference type="GO" id="GO:0006351">
    <property type="term" value="P:DNA-templated transcription"/>
    <property type="evidence" value="ECO:0007669"/>
    <property type="project" value="UniProtKB-UniRule"/>
</dbReference>
<dbReference type="CDD" id="cd00653">
    <property type="entry name" value="RNA_pol_B_RPB2"/>
    <property type="match status" value="1"/>
</dbReference>
<dbReference type="FunFam" id="2.40.50.150:FF:000006">
    <property type="entry name" value="DNA-directed RNA polymerase subunit beta"/>
    <property type="match status" value="1"/>
</dbReference>
<dbReference type="FunFam" id="3.90.1110.10:FF:000009">
    <property type="entry name" value="DNA-directed RNA polymerase subunit beta"/>
    <property type="match status" value="1"/>
</dbReference>
<dbReference type="Gene3D" id="2.40.50.100">
    <property type="match status" value="1"/>
</dbReference>
<dbReference type="Gene3D" id="2.40.50.150">
    <property type="match status" value="1"/>
</dbReference>
<dbReference type="Gene3D" id="3.90.1100.10">
    <property type="match status" value="1"/>
</dbReference>
<dbReference type="Gene3D" id="2.30.150.10">
    <property type="entry name" value="DNA-directed RNA polymerase, beta subunit, external 1 domain"/>
    <property type="match status" value="1"/>
</dbReference>
<dbReference type="Gene3D" id="2.40.270.10">
    <property type="entry name" value="DNA-directed RNA polymerase, subunit 2, domain 6"/>
    <property type="match status" value="2"/>
</dbReference>
<dbReference type="Gene3D" id="3.90.1800.10">
    <property type="entry name" value="RNA polymerase alpha subunit dimerisation domain"/>
    <property type="match status" value="1"/>
</dbReference>
<dbReference type="Gene3D" id="3.90.1110.10">
    <property type="entry name" value="RNA polymerase Rpb2, domain 2"/>
    <property type="match status" value="1"/>
</dbReference>
<dbReference type="HAMAP" id="MF_01321">
    <property type="entry name" value="RNApol_bact_RpoB"/>
    <property type="match status" value="1"/>
</dbReference>
<dbReference type="InterPro" id="IPR042107">
    <property type="entry name" value="DNA-dir_RNA_pol_bsu_ext_1_sf"/>
</dbReference>
<dbReference type="InterPro" id="IPR015712">
    <property type="entry name" value="DNA-dir_RNA_pol_su2"/>
</dbReference>
<dbReference type="InterPro" id="IPR007120">
    <property type="entry name" value="DNA-dir_RNAP_su2_dom"/>
</dbReference>
<dbReference type="InterPro" id="IPR037033">
    <property type="entry name" value="DNA-dir_RNAP_su2_hyb_sf"/>
</dbReference>
<dbReference type="InterPro" id="IPR010243">
    <property type="entry name" value="RNA_pol_bsu_bac"/>
</dbReference>
<dbReference type="InterPro" id="IPR007121">
    <property type="entry name" value="RNA_pol_bsu_CS"/>
</dbReference>
<dbReference type="InterPro" id="IPR007642">
    <property type="entry name" value="RNA_pol_Rpb2_2"/>
</dbReference>
<dbReference type="InterPro" id="IPR037034">
    <property type="entry name" value="RNA_pol_Rpb2_2_sf"/>
</dbReference>
<dbReference type="InterPro" id="IPR007645">
    <property type="entry name" value="RNA_pol_Rpb2_3"/>
</dbReference>
<dbReference type="InterPro" id="IPR007641">
    <property type="entry name" value="RNA_pol_Rpb2_7"/>
</dbReference>
<dbReference type="InterPro" id="IPR014724">
    <property type="entry name" value="RNA_pol_RPB2_OB-fold"/>
</dbReference>
<dbReference type="NCBIfam" id="NF001616">
    <property type="entry name" value="PRK00405.1"/>
    <property type="match status" value="1"/>
</dbReference>
<dbReference type="PANTHER" id="PTHR20856">
    <property type="entry name" value="DNA-DIRECTED RNA POLYMERASE I SUBUNIT 2"/>
    <property type="match status" value="1"/>
</dbReference>
<dbReference type="Pfam" id="PF04561">
    <property type="entry name" value="RNA_pol_Rpb2_2"/>
    <property type="match status" value="1"/>
</dbReference>
<dbReference type="Pfam" id="PF04565">
    <property type="entry name" value="RNA_pol_Rpb2_3"/>
    <property type="match status" value="1"/>
</dbReference>
<dbReference type="Pfam" id="PF00562">
    <property type="entry name" value="RNA_pol_Rpb2_6"/>
    <property type="match status" value="1"/>
</dbReference>
<dbReference type="Pfam" id="PF04560">
    <property type="entry name" value="RNA_pol_Rpb2_7"/>
    <property type="match status" value="1"/>
</dbReference>
<dbReference type="SUPFAM" id="SSF64484">
    <property type="entry name" value="beta and beta-prime subunits of DNA dependent RNA-polymerase"/>
    <property type="match status" value="1"/>
</dbReference>
<dbReference type="PROSITE" id="PS01166">
    <property type="entry name" value="RNA_POL_BETA"/>
    <property type="match status" value="1"/>
</dbReference>
<reference key="1">
    <citation type="journal article" date="2000" name="Eur. J. Biochem.">
        <title>The multisubunit chloroplast RNA polymerase A from mustard (Sinapis alba L.). Integration of a prokaryotic core into a larger complex with organelle-specific functions.</title>
        <authorList>
            <person name="Pfannschmidt T."/>
            <person name="Ogrzewalla K."/>
            <person name="Baginsky S."/>
            <person name="Sickmann A."/>
            <person name="Meyer H.E."/>
            <person name="Link G."/>
        </authorList>
    </citation>
    <scope>NUCLEOTIDE SEQUENCE [GENOMIC DNA]</scope>
    <scope>PROTEIN SEQUENCE OF 1-8</scope>
    <scope>CHARACTERIZATION</scope>
    <scope>IDENTIFICATION BY MASS SPECTROMETRY</scope>
    <source>
        <strain>cv. Albatros</strain>
        <tissue>Cotyledon</tissue>
    </source>
</reference>
<gene>
    <name type="primary">rpoB</name>
</gene>
<accession>P46818</accession>
<accession>Q9THV7</accession>
<comment type="function">
    <text>DNA-dependent RNA polymerase catalyzes the transcription of DNA into RNA using the four ribonucleoside triphosphates as substrates.</text>
</comment>
<comment type="catalytic activity">
    <reaction>
        <text>RNA(n) + a ribonucleoside 5'-triphosphate = RNA(n+1) + diphosphate</text>
        <dbReference type="Rhea" id="RHEA:21248"/>
        <dbReference type="Rhea" id="RHEA-COMP:14527"/>
        <dbReference type="Rhea" id="RHEA-COMP:17342"/>
        <dbReference type="ChEBI" id="CHEBI:33019"/>
        <dbReference type="ChEBI" id="CHEBI:61557"/>
        <dbReference type="ChEBI" id="CHEBI:140395"/>
        <dbReference type="EC" id="2.7.7.6"/>
    </reaction>
</comment>
<comment type="subunit">
    <text evidence="1">The minimal PEP RNA polymerase found in etioplasts (PEP-B) is composed of four subunits: alpha, beta, beta', and beta''. Following differentiation into chloroplasts the PEP-A RNA polymerase in this organism has been shown to be composed of at least 13 subunits, including the PEP-B subunits. When a (nuclear-encoded) sigma factor is associated with the core the holoenzyme is formed, which can initiate transcription (By similarity).</text>
</comment>
<comment type="subcellular location">
    <subcellularLocation>
        <location>Plastid</location>
        <location>Chloroplast</location>
    </subcellularLocation>
</comment>
<comment type="miscellaneous">
    <text>A second beta-like protein with a slightly lower molecular weight has been purified with the PEP-A polymerase as identified by mass spectrometry.</text>
</comment>
<comment type="similarity">
    <text evidence="2">Belongs to the RNA polymerase beta chain family.</text>
</comment>
<keyword id="KW-0002">3D-structure</keyword>
<keyword id="KW-0150">Chloroplast</keyword>
<keyword id="KW-0903">Direct protein sequencing</keyword>
<keyword id="KW-0240">DNA-directed RNA polymerase</keyword>
<keyword id="KW-0548">Nucleotidyltransferase</keyword>
<keyword id="KW-0934">Plastid</keyword>
<keyword id="KW-0804">Transcription</keyword>
<keyword id="KW-0808">Transferase</keyword>
<name>RPOB_SINAL</name>
<geneLocation type="chloroplast"/>
<feature type="chain" id="PRO_0000048048" description="DNA-directed RNA polymerase subunit beta">
    <location>
        <begin position="1"/>
        <end position="1078"/>
    </location>
</feature>
<feature type="sequence conflict" description="In Ref. 1; CAA57814." evidence="2" ref="1">
    <original>A</original>
    <variation>S</variation>
    <location>
        <position position="4"/>
    </location>
</feature>
<proteinExistence type="evidence at protein level"/>